<feature type="chain" id="PRO_0000070319" description="UPF0227 protein PM0825">
    <location>
        <begin position="1"/>
        <end position="179"/>
    </location>
</feature>
<evidence type="ECO:0000255" key="1">
    <source>
        <dbReference type="HAMAP-Rule" id="MF_01047"/>
    </source>
</evidence>
<name>Y825_PASMU</name>
<reference key="1">
    <citation type="journal article" date="2001" name="Proc. Natl. Acad. Sci. U.S.A.">
        <title>Complete genomic sequence of Pasteurella multocida Pm70.</title>
        <authorList>
            <person name="May B.J."/>
            <person name="Zhang Q."/>
            <person name="Li L.L."/>
            <person name="Paustian M.L."/>
            <person name="Whittam T.S."/>
            <person name="Kapur V."/>
        </authorList>
    </citation>
    <scope>NUCLEOTIDE SEQUENCE [LARGE SCALE GENOMIC DNA]</scope>
    <source>
        <strain>Pm70</strain>
    </source>
</reference>
<keyword id="KW-1185">Reference proteome</keyword>
<sequence length="179" mass="20836">MIIYLHGFDSSSPGNHEKVMQLKFIDEDVRFVNYSTLHPRHDMQFLLNEVHKLVSESKDPAPLICGVGLGGYWSERIGFLCGIKQAIFNPNLFPYENMTGKIDRPEEYKDIETKCVENFREKNKGKCLVFLSKEDGILDSQRSAALLSPFYEIVWDDVETHKFKKISHHLQRIKAFKQR</sequence>
<comment type="similarity">
    <text evidence="1">Belongs to the UPF0227 family.</text>
</comment>
<accession>Q9CMJ9</accession>
<protein>
    <recommendedName>
        <fullName evidence="1">UPF0227 protein PM0825</fullName>
    </recommendedName>
</protein>
<proteinExistence type="inferred from homology"/>
<gene>
    <name type="ordered locus">PM0825</name>
</gene>
<dbReference type="EMBL" id="AE004439">
    <property type="protein sequence ID" value="AAK02909.1"/>
    <property type="molecule type" value="Genomic_DNA"/>
</dbReference>
<dbReference type="SMR" id="Q9CMJ9"/>
<dbReference type="STRING" id="272843.PM0825"/>
<dbReference type="ESTHER" id="pasmu-y825">
    <property type="family name" value="abh_upf00227"/>
</dbReference>
<dbReference type="EnsemblBacteria" id="AAK02909">
    <property type="protein sequence ID" value="AAK02909"/>
    <property type="gene ID" value="PM0825"/>
</dbReference>
<dbReference type="KEGG" id="pmu:PM0825"/>
<dbReference type="HOGENOM" id="CLU_128769_0_0_6"/>
<dbReference type="OrthoDB" id="6469735at2"/>
<dbReference type="Proteomes" id="UP000000809">
    <property type="component" value="Chromosome"/>
</dbReference>
<dbReference type="Gene3D" id="3.40.50.1820">
    <property type="entry name" value="alpha/beta hydrolase"/>
    <property type="match status" value="1"/>
</dbReference>
<dbReference type="HAMAP" id="MF_01047">
    <property type="entry name" value="UPF0227"/>
    <property type="match status" value="1"/>
</dbReference>
<dbReference type="InterPro" id="IPR029058">
    <property type="entry name" value="AB_hydrolase_fold"/>
</dbReference>
<dbReference type="InterPro" id="IPR022987">
    <property type="entry name" value="UPF0227"/>
</dbReference>
<dbReference type="InterPro" id="IPR008886">
    <property type="entry name" value="UPF0227/Esterase_YqiA"/>
</dbReference>
<dbReference type="NCBIfam" id="NF003431">
    <property type="entry name" value="PRK04940.1"/>
    <property type="match status" value="1"/>
</dbReference>
<dbReference type="PANTHER" id="PTHR35602">
    <property type="entry name" value="ESTERASE YQIA-RELATED"/>
    <property type="match status" value="1"/>
</dbReference>
<dbReference type="PANTHER" id="PTHR35602:SF2">
    <property type="entry name" value="UPF0227 PROTEIN YCFP"/>
    <property type="match status" value="1"/>
</dbReference>
<dbReference type="Pfam" id="PF05728">
    <property type="entry name" value="UPF0227"/>
    <property type="match status" value="1"/>
</dbReference>
<organism>
    <name type="scientific">Pasteurella multocida (strain Pm70)</name>
    <dbReference type="NCBI Taxonomy" id="272843"/>
    <lineage>
        <taxon>Bacteria</taxon>
        <taxon>Pseudomonadati</taxon>
        <taxon>Pseudomonadota</taxon>
        <taxon>Gammaproteobacteria</taxon>
        <taxon>Pasteurellales</taxon>
        <taxon>Pasteurellaceae</taxon>
        <taxon>Pasteurella</taxon>
    </lineage>
</organism>